<keyword id="KW-0878">Amphibian defense peptide</keyword>
<keyword id="KW-0044">Antibiotic</keyword>
<keyword id="KW-0929">Antimicrobial</keyword>
<keyword id="KW-0903">Direct protein sequencing</keyword>
<keyword id="KW-1015">Disulfide bond</keyword>
<keyword id="KW-0295">Fungicide</keyword>
<keyword id="KW-0964">Secreted</keyword>
<feature type="peptide" id="PRO_0000043556" description="Ranalexin-1Ca" evidence="1">
    <location>
        <begin position="1"/>
        <end position="20"/>
    </location>
</feature>
<feature type="disulfide bond" evidence="1">
    <location>
        <begin position="14"/>
        <end position="20"/>
    </location>
</feature>
<accession>P82876</accession>
<name>RLCA_LITCL</name>
<sequence length="20" mass="2112">FLGGLMKAFPALICAVTKKC</sequence>
<reference key="1">
    <citation type="journal article" date="2000" name="Peptides">
        <title>Purification and characterization of antimicrobial peptides from the skin of the North American green frog Rana clamitans.</title>
        <authorList>
            <person name="Halverson T."/>
            <person name="Basir Y.J."/>
            <person name="Knoop F.C."/>
            <person name="Conlon J.M."/>
        </authorList>
    </citation>
    <scope>PROTEIN SEQUENCE</scope>
    <scope>FUNCTION</scope>
    <scope>MASS SPECTROMETRY</scope>
    <scope>SUBCELLULAR LOCATION</scope>
    <source>
        <tissue>Skin secretion</tissue>
    </source>
</reference>
<dbReference type="GO" id="GO:0005576">
    <property type="term" value="C:extracellular region"/>
    <property type="evidence" value="ECO:0007669"/>
    <property type="project" value="UniProtKB-SubCell"/>
</dbReference>
<dbReference type="GO" id="GO:0042742">
    <property type="term" value="P:defense response to bacterium"/>
    <property type="evidence" value="ECO:0007669"/>
    <property type="project" value="UniProtKB-KW"/>
</dbReference>
<dbReference type="GO" id="GO:0050832">
    <property type="term" value="P:defense response to fungus"/>
    <property type="evidence" value="ECO:0007669"/>
    <property type="project" value="UniProtKB-KW"/>
</dbReference>
<dbReference type="GO" id="GO:0031640">
    <property type="term" value="P:killing of cells of another organism"/>
    <property type="evidence" value="ECO:0007669"/>
    <property type="project" value="UniProtKB-KW"/>
</dbReference>
<dbReference type="InterPro" id="IPR012520">
    <property type="entry name" value="Antimicrobial_frog_1"/>
</dbReference>
<dbReference type="Pfam" id="PF08018">
    <property type="entry name" value="Antimicrobial_1"/>
    <property type="match status" value="1"/>
</dbReference>
<organism>
    <name type="scientific">Lithobates clamitans</name>
    <name type="common">Green frog</name>
    <name type="synonym">Rana clamitans</name>
    <dbReference type="NCBI Taxonomy" id="145282"/>
    <lineage>
        <taxon>Eukaryota</taxon>
        <taxon>Metazoa</taxon>
        <taxon>Chordata</taxon>
        <taxon>Craniata</taxon>
        <taxon>Vertebrata</taxon>
        <taxon>Euteleostomi</taxon>
        <taxon>Amphibia</taxon>
        <taxon>Batrachia</taxon>
        <taxon>Anura</taxon>
        <taxon>Neobatrachia</taxon>
        <taxon>Ranoidea</taxon>
        <taxon>Ranidae</taxon>
        <taxon>Lithobates</taxon>
    </lineage>
</organism>
<proteinExistence type="evidence at protein level"/>
<comment type="function">
    <text evidence="1">Antibacterial activity against Gram-positive bacterium S.aureus (MIC=17 uM) and Gram-negative bacterium E.coli (MIC=4 uM). Has activity against C.albicans (MIC=14 uM).</text>
</comment>
<comment type="subcellular location">
    <subcellularLocation>
        <location evidence="1">Secreted</location>
    </subcellularLocation>
</comment>
<comment type="tissue specificity">
    <text evidence="4">Expressed by the skin glands.</text>
</comment>
<comment type="mass spectrometry" mass="2109.0" error="0.02" method="Electrospray" evidence="1"/>
<comment type="similarity">
    <text evidence="3">Belongs to the frog skin active peptide (FSAP) family. Brevinin subfamily.</text>
</comment>
<protein>
    <recommendedName>
        <fullName evidence="2">Ranalexin-1Ca</fullName>
    </recommendedName>
</protein>
<evidence type="ECO:0000269" key="1">
    <source>
    </source>
</evidence>
<evidence type="ECO:0000303" key="2">
    <source>
    </source>
</evidence>
<evidence type="ECO:0000305" key="3"/>
<evidence type="ECO:0000305" key="4">
    <source>
    </source>
</evidence>